<feature type="chain" id="PRO_0000262003" description="UPF0246 protein Bcep18194_A5551">
    <location>
        <begin position="1"/>
        <end position="260"/>
    </location>
</feature>
<gene>
    <name type="ordered locus">Bcep18194_A5551</name>
</gene>
<sequence length="260" mass="29149">MIIVLSPAKSLDYDTPAHVQSYTKPAFVDDASELIDGLRKLSPQDIATLMDISDPLARLNFQRYADWSTTFTPANAKQAVLAFNGDVYEGFDAKSLSSADLDYAQQHVRVLSGLYGLLRPLDLLQPYRLEMGTRFPTARGKDLYAFWGDRITRALNEQLETRSGAARVLVNCASTEYFKSVKPKLLAAPVITPVFEDWKGGRYKIISFHAKRARGLMARFIVENRITDPKALKDFATEGYAFDAAASNDSTYVYRRRVGE</sequence>
<dbReference type="EMBL" id="CP000151">
    <property type="protein sequence ID" value="ABB09145.1"/>
    <property type="molecule type" value="Genomic_DNA"/>
</dbReference>
<dbReference type="RefSeq" id="WP_011352678.1">
    <property type="nucleotide sequence ID" value="NC_007510.1"/>
</dbReference>
<dbReference type="SMR" id="Q39EH1"/>
<dbReference type="GeneID" id="45095437"/>
<dbReference type="KEGG" id="bur:Bcep18194_A5551"/>
<dbReference type="PATRIC" id="fig|482957.22.peg.2515"/>
<dbReference type="HOGENOM" id="CLU_061989_0_0_4"/>
<dbReference type="Proteomes" id="UP000002705">
    <property type="component" value="Chromosome 1"/>
</dbReference>
<dbReference type="GO" id="GO:0005829">
    <property type="term" value="C:cytosol"/>
    <property type="evidence" value="ECO:0007669"/>
    <property type="project" value="TreeGrafter"/>
</dbReference>
<dbReference type="GO" id="GO:0033194">
    <property type="term" value="P:response to hydroperoxide"/>
    <property type="evidence" value="ECO:0007669"/>
    <property type="project" value="TreeGrafter"/>
</dbReference>
<dbReference type="HAMAP" id="MF_00652">
    <property type="entry name" value="UPF0246"/>
    <property type="match status" value="1"/>
</dbReference>
<dbReference type="InterPro" id="IPR005583">
    <property type="entry name" value="YaaA"/>
</dbReference>
<dbReference type="NCBIfam" id="NF002541">
    <property type="entry name" value="PRK02101.1-1"/>
    <property type="match status" value="1"/>
</dbReference>
<dbReference type="NCBIfam" id="NF002542">
    <property type="entry name" value="PRK02101.1-3"/>
    <property type="match status" value="1"/>
</dbReference>
<dbReference type="PANTHER" id="PTHR30283:SF4">
    <property type="entry name" value="PEROXIDE STRESS RESISTANCE PROTEIN YAAA"/>
    <property type="match status" value="1"/>
</dbReference>
<dbReference type="PANTHER" id="PTHR30283">
    <property type="entry name" value="PEROXIDE STRESS RESPONSE PROTEIN YAAA"/>
    <property type="match status" value="1"/>
</dbReference>
<dbReference type="Pfam" id="PF03883">
    <property type="entry name" value="H2O2_YaaD"/>
    <property type="match status" value="1"/>
</dbReference>
<proteinExistence type="inferred from homology"/>
<protein>
    <recommendedName>
        <fullName evidence="1">UPF0246 protein Bcep18194_A5551</fullName>
    </recommendedName>
</protein>
<accession>Q39EH1</accession>
<name>Y5551_BURL3</name>
<organism>
    <name type="scientific">Burkholderia lata (strain ATCC 17760 / DSM 23089 / LMG 22485 / NCIMB 9086 / R18194 / 383)</name>
    <dbReference type="NCBI Taxonomy" id="482957"/>
    <lineage>
        <taxon>Bacteria</taxon>
        <taxon>Pseudomonadati</taxon>
        <taxon>Pseudomonadota</taxon>
        <taxon>Betaproteobacteria</taxon>
        <taxon>Burkholderiales</taxon>
        <taxon>Burkholderiaceae</taxon>
        <taxon>Burkholderia</taxon>
        <taxon>Burkholderia cepacia complex</taxon>
    </lineage>
</organism>
<evidence type="ECO:0000255" key="1">
    <source>
        <dbReference type="HAMAP-Rule" id="MF_00652"/>
    </source>
</evidence>
<comment type="similarity">
    <text evidence="1">Belongs to the UPF0246 family.</text>
</comment>
<reference key="1">
    <citation type="submission" date="2005-10" db="EMBL/GenBank/DDBJ databases">
        <title>Complete sequence of chromosome 1 of Burkholderia sp. 383.</title>
        <authorList>
            <consortium name="US DOE Joint Genome Institute"/>
            <person name="Copeland A."/>
            <person name="Lucas S."/>
            <person name="Lapidus A."/>
            <person name="Barry K."/>
            <person name="Detter J.C."/>
            <person name="Glavina T."/>
            <person name="Hammon N."/>
            <person name="Israni S."/>
            <person name="Pitluck S."/>
            <person name="Chain P."/>
            <person name="Malfatti S."/>
            <person name="Shin M."/>
            <person name="Vergez L."/>
            <person name="Schmutz J."/>
            <person name="Larimer F."/>
            <person name="Land M."/>
            <person name="Kyrpides N."/>
            <person name="Lykidis A."/>
            <person name="Richardson P."/>
        </authorList>
    </citation>
    <scope>NUCLEOTIDE SEQUENCE [LARGE SCALE GENOMIC DNA]</scope>
    <source>
        <strain>ATCC 17760 / DSM 23089 / LMG 22485 / NCIMB 9086 / R18194 / 383</strain>
    </source>
</reference>